<sequence>MLVRFGRRSGQAKESAEMKNCEEDPVLYPPLLPTKVDLRQVTIIPHNEWERIRDSLDSLTREAACLRAERKAKKEMHLRSQEVVKHWTNTYAGMKEQKLEAKKKRDEEIEAERQILDIEEAIYKQGERKKAIELAKQYQFYQTERVKNFHSGLLLSRVMKERDAQIEFQKSKIKSDKKWEEQVKLNVEKAFKEEREKAEKQRRERVALAKDHLKQIKEHEEEEERRRKEEEKDAEEIKRQNSLYEIEMKKKQGKKKEEINESRRLFFEHLNDKHIIKAVEQQQQEEEDEKIRKFIKAKKRLTQMGKEKEAETHRLMEERRKRINNFLSKLMKEKFDNEDLIIARDIAEAEAEWEKREREKYEKNKAELKAIAEHRALVMKNKEEEERQRKIEATEQMLAILKADQIFWEHEKEKKQKADKERREVQDAHIQQMAKHKFNALQAKQAESEYCRLTEALVAEKEKEFQDYAREVIESESESTKKYIYPLVKAVQEGPGGGRGPVLVDRGGLRPSYQANDTTGVQLPFYNSPGSKYNNFQKSKGRLGFTW</sequence>
<comment type="function">
    <text evidence="3">Microtubule inner protein (MIP) part of the dynein-decorated doublet microtubules (DMTs) in cilia axoneme, which is required for motile cilia beating.</text>
</comment>
<comment type="subunit">
    <text evidence="4">Microtubule inner protein component of sperm flagellar doublet microtubules.</text>
</comment>
<comment type="subcellular location">
    <subcellularLocation>
        <location evidence="3">Cytoplasm</location>
        <location evidence="3">Cytoskeleton</location>
        <location evidence="3">Cilium axoneme</location>
    </subcellularLocation>
    <subcellularLocation>
        <location evidence="4">Cytoplasm</location>
        <location evidence="4">Cytoskeleton</location>
        <location evidence="4">Flagellum axoneme</location>
    </subcellularLocation>
</comment>
<comment type="tissue specificity">
    <text evidence="3">Expressed in trachea multiciliated cells.</text>
</comment>
<reference key="1">
    <citation type="journal article" date="2009" name="Genome Biol.">
        <title>A whole-genome assembly of the domestic cow, Bos taurus.</title>
        <authorList>
            <person name="Zimin A.V."/>
            <person name="Delcher A.L."/>
            <person name="Florea L."/>
            <person name="Kelley D.R."/>
            <person name="Schatz M.C."/>
            <person name="Puiu D."/>
            <person name="Hanrahan F."/>
            <person name="Pertea G."/>
            <person name="Van Tassell C.P."/>
            <person name="Sonstegard T.S."/>
            <person name="Marcais G."/>
            <person name="Roberts M."/>
            <person name="Subramanian P."/>
            <person name="Yorke J.A."/>
            <person name="Salzberg S.L."/>
        </authorList>
    </citation>
    <scope>NUCLEOTIDE SEQUENCE [LARGE SCALE GENOMIC DNA]</scope>
    <source>
        <strain>Hereford</strain>
    </source>
</reference>
<reference evidence="6" key="2">
    <citation type="journal article" date="2021" name="Cell">
        <title>De novo identification of mammalian ciliary motility proteins using cryo-EM.</title>
        <authorList>
            <person name="Gui M."/>
            <person name="Farley H."/>
            <person name="Anujan P."/>
            <person name="Anderson J.R."/>
            <person name="Maxwell D.W."/>
            <person name="Whitchurch J.B."/>
            <person name="Botsch J.J."/>
            <person name="Qiu T."/>
            <person name="Meleppattu S."/>
            <person name="Singh S.K."/>
            <person name="Zhang Q."/>
            <person name="Thompson J."/>
            <person name="Lucas J.S."/>
            <person name="Bingle C.D."/>
            <person name="Norris D.P."/>
            <person name="Roy S."/>
            <person name="Brown A."/>
        </authorList>
    </citation>
    <scope>STRUCTURE BY ELECTRON MICROSCOPY (3.40 ANGSTROMS)</scope>
    <scope>FUNCTION</scope>
    <scope>SUBCELLULAR LOCATION</scope>
    <scope>TISSUE SPECIFICITY</scope>
</reference>
<reference evidence="7" key="3">
    <citation type="journal article" date="2023" name="Cell">
        <title>Structural specializations of the sperm tail.</title>
        <authorList>
            <person name="Leung M.R."/>
            <person name="Zeng J."/>
            <person name="Wang X."/>
            <person name="Roelofs M.C."/>
            <person name="Huang W."/>
            <person name="Zenezini Chiozzi R."/>
            <person name="Hevler J.F."/>
            <person name="Heck A.J.R."/>
            <person name="Dutcher S.K."/>
            <person name="Brown A."/>
            <person name="Zhang R."/>
            <person name="Zeev-Ben-Mordehai T."/>
        </authorList>
    </citation>
    <scope>STRUCTURE BY ELECTRON MICROSCOPY (3.60 ANGSTROMS)</scope>
    <scope>SUBUNIT</scope>
    <scope>SUBCELLULAR LOCATION</scope>
</reference>
<protein>
    <recommendedName>
        <fullName>Cilia- and flagella- associated protein 210</fullName>
    </recommendedName>
</protein>
<name>CF210_BOVIN</name>
<gene>
    <name type="primary">CFAP210</name>
    <name type="synonym">CCDC173</name>
</gene>
<evidence type="ECO:0000255" key="1"/>
<evidence type="ECO:0000256" key="2">
    <source>
        <dbReference type="SAM" id="MobiDB-lite"/>
    </source>
</evidence>
<evidence type="ECO:0000269" key="3">
    <source>
    </source>
</evidence>
<evidence type="ECO:0000269" key="4">
    <source>
    </source>
</evidence>
<evidence type="ECO:0000312" key="5">
    <source>
        <dbReference type="Proteomes" id="UP000009136"/>
    </source>
</evidence>
<evidence type="ECO:0007744" key="6">
    <source>
        <dbReference type="PDB" id="7RRO"/>
    </source>
</evidence>
<evidence type="ECO:0007744" key="7">
    <source>
        <dbReference type="PDB" id="8OTZ"/>
    </source>
</evidence>
<keyword id="KW-0002">3D-structure</keyword>
<keyword id="KW-0966">Cell projection</keyword>
<keyword id="KW-0969">Cilium</keyword>
<keyword id="KW-0175">Coiled coil</keyword>
<keyword id="KW-0963">Cytoplasm</keyword>
<keyword id="KW-0206">Cytoskeleton</keyword>
<keyword id="KW-0282">Flagellum</keyword>
<keyword id="KW-1185">Reference proteome</keyword>
<feature type="chain" id="PRO_0000456162" description="Cilia- and flagella- associated protein 210">
    <location>
        <begin position="1"/>
        <end position="547"/>
    </location>
</feature>
<feature type="region of interest" description="Disordered" evidence="2">
    <location>
        <begin position="210"/>
        <end position="237"/>
    </location>
</feature>
<feature type="coiled-coil region" evidence="1">
    <location>
        <begin position="184"/>
        <end position="254"/>
    </location>
</feature>
<accession>E1BJL9</accession>
<proteinExistence type="evidence at protein level"/>
<dbReference type="PDB" id="7RRO">
    <property type="method" value="EM"/>
    <property type="resolution" value="3.40 A"/>
    <property type="chains" value="o/p=1-547"/>
</dbReference>
<dbReference type="PDB" id="8OTZ">
    <property type="method" value="EM"/>
    <property type="resolution" value="3.60 A"/>
    <property type="chains" value="H/o=1-547"/>
</dbReference>
<dbReference type="PDB" id="9CPB">
    <property type="method" value="EM"/>
    <property type="resolution" value="3.52 A"/>
    <property type="chains" value="1H/1I=1-547"/>
</dbReference>
<dbReference type="PDBsum" id="7RRO"/>
<dbReference type="PDBsum" id="8OTZ"/>
<dbReference type="PDBsum" id="9CPB"/>
<dbReference type="EMDB" id="EMD-17187"/>
<dbReference type="EMDB" id="EMD-24664"/>
<dbReference type="EMDB" id="EMD-45801"/>
<dbReference type="EMDB" id="EMD-50664"/>
<dbReference type="SMR" id="E1BJL9"/>
<dbReference type="FunCoup" id="E1BJL9">
    <property type="interactions" value="478"/>
</dbReference>
<dbReference type="STRING" id="9913.ENSBTAP00000044199"/>
<dbReference type="PaxDb" id="9913-ENSBTAP00000044199"/>
<dbReference type="VEuPathDB" id="HostDB:ENSBTAG00000001090"/>
<dbReference type="eggNOG" id="ENOG502QPZ3">
    <property type="taxonomic scope" value="Eukaryota"/>
</dbReference>
<dbReference type="HOGENOM" id="CLU_036492_1_0_1"/>
<dbReference type="InParanoid" id="E1BJL9"/>
<dbReference type="OMA" id="EMHFRSQ"/>
<dbReference type="TreeFam" id="TF328736"/>
<dbReference type="Proteomes" id="UP000009136">
    <property type="component" value="Chromosome 2"/>
</dbReference>
<dbReference type="Bgee" id="ENSBTAG00000001090">
    <property type="expression patterns" value="Expressed in semen and 81 other cell types or tissues"/>
</dbReference>
<dbReference type="GO" id="GO:0160112">
    <property type="term" value="C:axonemal B tubule inner sheath"/>
    <property type="evidence" value="ECO:0000250"/>
    <property type="project" value="UniProtKB"/>
</dbReference>
<dbReference type="GO" id="GO:0005879">
    <property type="term" value="C:axonemal microtubule"/>
    <property type="evidence" value="ECO:0000314"/>
    <property type="project" value="UniProtKB"/>
</dbReference>
<dbReference type="GO" id="GO:0036126">
    <property type="term" value="C:sperm flagellum"/>
    <property type="evidence" value="ECO:0000250"/>
    <property type="project" value="UniProtKB"/>
</dbReference>
<dbReference type="GO" id="GO:0030317">
    <property type="term" value="P:flagellated sperm motility"/>
    <property type="evidence" value="ECO:0000250"/>
    <property type="project" value="UniProtKB"/>
</dbReference>
<dbReference type="InterPro" id="IPR039986">
    <property type="entry name" value="CFAP210"/>
</dbReference>
<dbReference type="InterPro" id="IPR043597">
    <property type="entry name" value="TPH_dom"/>
</dbReference>
<dbReference type="PANTHER" id="PTHR28663:SF1">
    <property type="entry name" value="CILIA- AND FLAGELLA- ASSOCIATED PROTEIN 210"/>
    <property type="match status" value="1"/>
</dbReference>
<dbReference type="PANTHER" id="PTHR28663">
    <property type="entry name" value="COILED-COIL DOMAIN-CONTAINING PROTEIN 173"/>
    <property type="match status" value="1"/>
</dbReference>
<dbReference type="Pfam" id="PF13868">
    <property type="entry name" value="TPH"/>
    <property type="match status" value="1"/>
</dbReference>
<organism evidence="5">
    <name type="scientific">Bos taurus</name>
    <name type="common">Bovine</name>
    <dbReference type="NCBI Taxonomy" id="9913"/>
    <lineage>
        <taxon>Eukaryota</taxon>
        <taxon>Metazoa</taxon>
        <taxon>Chordata</taxon>
        <taxon>Craniata</taxon>
        <taxon>Vertebrata</taxon>
        <taxon>Euteleostomi</taxon>
        <taxon>Mammalia</taxon>
        <taxon>Eutheria</taxon>
        <taxon>Laurasiatheria</taxon>
        <taxon>Artiodactyla</taxon>
        <taxon>Ruminantia</taxon>
        <taxon>Pecora</taxon>
        <taxon>Bovidae</taxon>
        <taxon>Bovinae</taxon>
        <taxon>Bos</taxon>
    </lineage>
</organism>